<comment type="function">
    <text evidence="1">Part of the twin-arginine translocation (Tat) system that transports large folded proteins containing a characteristic twin-arginine motif in their signal peptide across membranes. Together with TatC, TatB is part of a receptor directly interacting with Tat signal peptides. TatB may form an oligomeric binding site that transiently accommodates folded Tat precursor proteins before their translocation.</text>
</comment>
<comment type="subunit">
    <text evidence="1">The Tat system comprises two distinct complexes: a TatABC complex, containing multiple copies of TatA, TatB and TatC subunits, and a separate TatA complex, containing only TatA subunits. Substrates initially bind to the TatABC complex, which probably triggers association of the separate TatA complex to form the active translocon.</text>
</comment>
<comment type="subcellular location">
    <subcellularLocation>
        <location evidence="1">Cell inner membrane</location>
        <topology evidence="1">Single-pass membrane protein</topology>
    </subcellularLocation>
</comment>
<comment type="similarity">
    <text evidence="1">Belongs to the TatB family.</text>
</comment>
<protein>
    <recommendedName>
        <fullName evidence="1">Sec-independent protein translocase protein TatB</fullName>
    </recommendedName>
</protein>
<evidence type="ECO:0000255" key="1">
    <source>
        <dbReference type="HAMAP-Rule" id="MF_00237"/>
    </source>
</evidence>
<evidence type="ECO:0000256" key="2">
    <source>
        <dbReference type="SAM" id="MobiDB-lite"/>
    </source>
</evidence>
<name>TATB_ECOL5</name>
<sequence>MFDIGFSELLLVFIIGLVVLGPQRLPVAVKTVAGWIRALRSLATTVQNELTQELKLQEFQDSLKKVEKASLTNLTPELKASMDELRQAAESMKRSYVANDPEKASDEAHTIHNPVVKDNETAHEGVTPAAAQTQASSPEQKPETTPEPVVKPAADAEPKTAAPSPSSSDKP</sequence>
<reference key="1">
    <citation type="journal article" date="2006" name="Mol. Microbiol.">
        <title>Role of pathogenicity island-associated integrases in the genome plasticity of uropathogenic Escherichia coli strain 536.</title>
        <authorList>
            <person name="Hochhut B."/>
            <person name="Wilde C."/>
            <person name="Balling G."/>
            <person name="Middendorf B."/>
            <person name="Dobrindt U."/>
            <person name="Brzuszkiewicz E."/>
            <person name="Gottschalk G."/>
            <person name="Carniel E."/>
            <person name="Hacker J."/>
        </authorList>
    </citation>
    <scope>NUCLEOTIDE SEQUENCE [LARGE SCALE GENOMIC DNA]</scope>
    <source>
        <strain>536 / UPEC</strain>
    </source>
</reference>
<feature type="chain" id="PRO_0000301170" description="Sec-independent protein translocase protein TatB">
    <location>
        <begin position="1"/>
        <end position="171"/>
    </location>
</feature>
<feature type="transmembrane region" description="Helical" evidence="1">
    <location>
        <begin position="1"/>
        <end position="21"/>
    </location>
</feature>
<feature type="region of interest" description="Disordered" evidence="2">
    <location>
        <begin position="117"/>
        <end position="171"/>
    </location>
</feature>
<feature type="compositionally biased region" description="Polar residues" evidence="2">
    <location>
        <begin position="130"/>
        <end position="139"/>
    </location>
</feature>
<keyword id="KW-0997">Cell inner membrane</keyword>
<keyword id="KW-1003">Cell membrane</keyword>
<keyword id="KW-0472">Membrane</keyword>
<keyword id="KW-0653">Protein transport</keyword>
<keyword id="KW-0811">Translocation</keyword>
<keyword id="KW-0812">Transmembrane</keyword>
<keyword id="KW-1133">Transmembrane helix</keyword>
<keyword id="KW-0813">Transport</keyword>
<dbReference type="EMBL" id="CP000247">
    <property type="protein sequence ID" value="ABG72012.1"/>
    <property type="molecule type" value="Genomic_DNA"/>
</dbReference>
<dbReference type="RefSeq" id="WP_000459600.1">
    <property type="nucleotide sequence ID" value="NC_008253.1"/>
</dbReference>
<dbReference type="SMR" id="Q0TAL7"/>
<dbReference type="KEGG" id="ecp:ECP_4052"/>
<dbReference type="HOGENOM" id="CLU_086034_1_0_6"/>
<dbReference type="Proteomes" id="UP000009182">
    <property type="component" value="Chromosome"/>
</dbReference>
<dbReference type="GO" id="GO:0033281">
    <property type="term" value="C:TAT protein transport complex"/>
    <property type="evidence" value="ECO:0007669"/>
    <property type="project" value="UniProtKB-UniRule"/>
</dbReference>
<dbReference type="GO" id="GO:0008320">
    <property type="term" value="F:protein transmembrane transporter activity"/>
    <property type="evidence" value="ECO:0007669"/>
    <property type="project" value="UniProtKB-UniRule"/>
</dbReference>
<dbReference type="GO" id="GO:0043953">
    <property type="term" value="P:protein transport by the Tat complex"/>
    <property type="evidence" value="ECO:0007669"/>
    <property type="project" value="UniProtKB-UniRule"/>
</dbReference>
<dbReference type="FunFam" id="1.20.5.3310:FF:000002">
    <property type="entry name" value="Sec-independent protein translocase protein TatB"/>
    <property type="match status" value="1"/>
</dbReference>
<dbReference type="Gene3D" id="1.20.5.3310">
    <property type="match status" value="1"/>
</dbReference>
<dbReference type="HAMAP" id="MF_00237">
    <property type="entry name" value="TatB"/>
    <property type="match status" value="1"/>
</dbReference>
<dbReference type="InterPro" id="IPR018448">
    <property type="entry name" value="TatB"/>
</dbReference>
<dbReference type="NCBIfam" id="TIGR01410">
    <property type="entry name" value="tatB"/>
    <property type="match status" value="1"/>
</dbReference>
<dbReference type="PANTHER" id="PTHR33162">
    <property type="entry name" value="SEC-INDEPENDENT PROTEIN TRANSLOCASE PROTEIN TATA, CHLOROPLASTIC"/>
    <property type="match status" value="1"/>
</dbReference>
<dbReference type="PANTHER" id="PTHR33162:SF1">
    <property type="entry name" value="SEC-INDEPENDENT PROTEIN TRANSLOCASE PROTEIN TATA, CHLOROPLASTIC"/>
    <property type="match status" value="1"/>
</dbReference>
<dbReference type="PRINTS" id="PR01506">
    <property type="entry name" value="TATBPROTEIN"/>
</dbReference>
<proteinExistence type="inferred from homology"/>
<gene>
    <name evidence="1" type="primary">tatB</name>
    <name type="ordered locus">ECP_4052</name>
</gene>
<organism>
    <name type="scientific">Escherichia coli O6:K15:H31 (strain 536 / UPEC)</name>
    <dbReference type="NCBI Taxonomy" id="362663"/>
    <lineage>
        <taxon>Bacteria</taxon>
        <taxon>Pseudomonadati</taxon>
        <taxon>Pseudomonadota</taxon>
        <taxon>Gammaproteobacteria</taxon>
        <taxon>Enterobacterales</taxon>
        <taxon>Enterobacteriaceae</taxon>
        <taxon>Escherichia</taxon>
    </lineage>
</organism>
<accession>Q0TAL7</accession>